<accession>A3KP37</accession>
<reference key="1">
    <citation type="submission" date="2007-03" db="EMBL/GenBank/DDBJ databases">
        <authorList>
            <consortium name="NIH - Zebrafish Gene Collection (ZGC) project"/>
        </authorList>
    </citation>
    <scope>NUCLEOTIDE SEQUENCE [LARGE SCALE MRNA]</scope>
    <source>
        <tissue>Embryo</tissue>
    </source>
</reference>
<keyword id="KW-0472">Membrane</keyword>
<keyword id="KW-0489">Methyltransferase</keyword>
<keyword id="KW-0496">Mitochondrion</keyword>
<keyword id="KW-0999">Mitochondrion inner membrane</keyword>
<keyword id="KW-0560">Oxidoreductase</keyword>
<keyword id="KW-1185">Reference proteome</keyword>
<keyword id="KW-0808">Transferase</keyword>
<keyword id="KW-0809">Transit peptide</keyword>
<proteinExistence type="evidence at transcript level"/>
<protein>
    <recommendedName>
        <fullName>Arginine-hydroxylase NDUFAF5, mitochondrial</fullName>
        <ecNumber evidence="1">1.-.-.-</ecNumber>
    </recommendedName>
    <alternativeName>
        <fullName evidence="1">NADH dehydrogenase [ubiquinone] 1 alpha subcomplex assembly factor 5</fullName>
    </alternativeName>
    <alternativeName>
        <fullName evidence="4">Putative methyltransferase NDUFAF5</fullName>
        <ecNumber evidence="4">2.1.1.-</ecNumber>
    </alternativeName>
</protein>
<comment type="function">
    <text evidence="1">Arginine hydroxylase that mediates hydroxylation of 'Arg-111' of NDUFS7 and is involved in the assembly of mitochondrial NADH:ubiquinone oxidoreductase complex (complex I, MT-ND1) at early stages. May also have methyltransferase activity.</text>
</comment>
<comment type="subunit">
    <text evidence="1">Interacts with NDUFS7.</text>
</comment>
<comment type="subcellular location">
    <subcellularLocation>
        <location evidence="1">Mitochondrion inner membrane</location>
    </subcellularLocation>
    <text evidence="1">Peripherally localized on the matrix face of the mitochondrial inner membrane.</text>
</comment>
<comment type="similarity">
    <text evidence="4">Belongs to the methyltransferase superfamily.</text>
</comment>
<name>NDUF5_DANRE</name>
<organism>
    <name type="scientific">Danio rerio</name>
    <name type="common">Zebrafish</name>
    <name type="synonym">Brachydanio rerio</name>
    <dbReference type="NCBI Taxonomy" id="7955"/>
    <lineage>
        <taxon>Eukaryota</taxon>
        <taxon>Metazoa</taxon>
        <taxon>Chordata</taxon>
        <taxon>Craniata</taxon>
        <taxon>Vertebrata</taxon>
        <taxon>Euteleostomi</taxon>
        <taxon>Actinopterygii</taxon>
        <taxon>Neopterygii</taxon>
        <taxon>Teleostei</taxon>
        <taxon>Ostariophysi</taxon>
        <taxon>Cypriniformes</taxon>
        <taxon>Danionidae</taxon>
        <taxon>Danioninae</taxon>
        <taxon>Danio</taxon>
    </lineage>
</organism>
<feature type="transit peptide" description="Mitochondrion" evidence="2">
    <location>
        <begin position="1"/>
        <end position="25"/>
    </location>
</feature>
<feature type="chain" id="PRO_0000307216" description="Arginine-hydroxylase NDUFAF5, mitochondrial">
    <location>
        <begin position="26"/>
        <end position="321"/>
    </location>
</feature>
<gene>
    <name evidence="1" type="primary">ndufaf5</name>
    <name evidence="3" type="ORF">zgc:162919</name>
</gene>
<evidence type="ECO:0000250" key="1">
    <source>
        <dbReference type="UniProtKB" id="Q5TEU4"/>
    </source>
</evidence>
<evidence type="ECO:0000255" key="2"/>
<evidence type="ECO:0000303" key="3">
    <source ref="1"/>
</evidence>
<evidence type="ECO:0000305" key="4"/>
<dbReference type="EC" id="1.-.-.-" evidence="1"/>
<dbReference type="EC" id="2.1.1.-" evidence="4"/>
<dbReference type="EMBL" id="BC134146">
    <property type="protein sequence ID" value="AAI34147.1"/>
    <property type="molecule type" value="mRNA"/>
</dbReference>
<dbReference type="RefSeq" id="NP_001076363.1">
    <property type="nucleotide sequence ID" value="NM_001082894.1"/>
</dbReference>
<dbReference type="SMR" id="A3KP37"/>
<dbReference type="FunCoup" id="A3KP37">
    <property type="interactions" value="1338"/>
</dbReference>
<dbReference type="STRING" id="7955.ENSDARP00000113500"/>
<dbReference type="PaxDb" id="7955-ENSDARP00000113500"/>
<dbReference type="PeptideAtlas" id="A3KP37"/>
<dbReference type="GeneID" id="794020"/>
<dbReference type="KEGG" id="dre:794020"/>
<dbReference type="AGR" id="ZFIN:ZDB-GENE-070410-110"/>
<dbReference type="CTD" id="79133"/>
<dbReference type="ZFIN" id="ZDB-GENE-070410-110">
    <property type="gene designation" value="ndufaf5"/>
</dbReference>
<dbReference type="eggNOG" id="KOG2940">
    <property type="taxonomic scope" value="Eukaryota"/>
</dbReference>
<dbReference type="InParanoid" id="A3KP37"/>
<dbReference type="OrthoDB" id="16816at2759"/>
<dbReference type="PRO" id="PR:A3KP37"/>
<dbReference type="Proteomes" id="UP000000437">
    <property type="component" value="Chromosome 1"/>
</dbReference>
<dbReference type="GO" id="GO:0005743">
    <property type="term" value="C:mitochondrial inner membrane"/>
    <property type="evidence" value="ECO:0007669"/>
    <property type="project" value="UniProtKB-SubCell"/>
</dbReference>
<dbReference type="GO" id="GO:0005739">
    <property type="term" value="C:mitochondrion"/>
    <property type="evidence" value="ECO:0000250"/>
    <property type="project" value="UniProtKB"/>
</dbReference>
<dbReference type="GO" id="GO:0004497">
    <property type="term" value="F:monooxygenase activity"/>
    <property type="evidence" value="ECO:0000250"/>
    <property type="project" value="UniProtKB"/>
</dbReference>
<dbReference type="GO" id="GO:0008757">
    <property type="term" value="F:S-adenosylmethionine-dependent methyltransferase activity"/>
    <property type="evidence" value="ECO:0007669"/>
    <property type="project" value="InterPro"/>
</dbReference>
<dbReference type="GO" id="GO:0032259">
    <property type="term" value="P:methylation"/>
    <property type="evidence" value="ECO:0007669"/>
    <property type="project" value="UniProtKB-KW"/>
</dbReference>
<dbReference type="GO" id="GO:0032981">
    <property type="term" value="P:mitochondrial respiratory chain complex I assembly"/>
    <property type="evidence" value="ECO:0000250"/>
    <property type="project" value="UniProtKB"/>
</dbReference>
<dbReference type="CDD" id="cd02440">
    <property type="entry name" value="AdoMet_MTases"/>
    <property type="match status" value="1"/>
</dbReference>
<dbReference type="FunFam" id="3.40.50.150:FF:000199">
    <property type="entry name" value="arginine-hydroxylase NDUFAF5, mitochondrial isoform X1"/>
    <property type="match status" value="1"/>
</dbReference>
<dbReference type="Gene3D" id="3.40.50.150">
    <property type="entry name" value="Vaccinia Virus protein VP39"/>
    <property type="match status" value="1"/>
</dbReference>
<dbReference type="InterPro" id="IPR050602">
    <property type="entry name" value="Malonyl-ACP_OMT"/>
</dbReference>
<dbReference type="InterPro" id="IPR013216">
    <property type="entry name" value="Methyltransf_11"/>
</dbReference>
<dbReference type="InterPro" id="IPR029063">
    <property type="entry name" value="SAM-dependent_MTases_sf"/>
</dbReference>
<dbReference type="PANTHER" id="PTHR13090">
    <property type="entry name" value="ARGININE-HYDROXYLASE NDUFAF5, MITOCHONDRIAL"/>
    <property type="match status" value="1"/>
</dbReference>
<dbReference type="PANTHER" id="PTHR13090:SF1">
    <property type="entry name" value="ARGININE-HYDROXYLASE NDUFAF5, MITOCHONDRIAL"/>
    <property type="match status" value="1"/>
</dbReference>
<dbReference type="Pfam" id="PF08241">
    <property type="entry name" value="Methyltransf_11"/>
    <property type="match status" value="1"/>
</dbReference>
<dbReference type="SUPFAM" id="SSF53335">
    <property type="entry name" value="S-adenosyl-L-methionine-dependent methyltransferases"/>
    <property type="match status" value="1"/>
</dbReference>
<sequence>MNVSVKSLRGVSRTWRSFSSRQGMNVFDRSMKRRQKDWASSLLDSSKYDYLREEVGSRVADRVYDVARTFPLALDVGCGRSHIAEHLSKEVVERLFLTDISSSSLRNRKTSDIPAQCVMADEEFLPFKENTFDLVLSSLSMHWINDLPGALRQIHQVLKPDGVFIGAMVGGETLYELRCSLQLAELEREGGFAPHISPYTAVTDLGNLLGQAGFNMLTVDIDEVQVNYPGMLEVMRDLQGMGESNCAWNRKLLLQRDTMLAAAAIYKEMYGNEDGSVPATFQILYMIGWKPHDSQAKPAKRGSANVSFADLSKIGKLQSDQ</sequence>